<dbReference type="EC" id="2.2.1.9" evidence="1"/>
<dbReference type="EMBL" id="CU458896">
    <property type="protein sequence ID" value="CAM64007.1"/>
    <property type="molecule type" value="Genomic_DNA"/>
</dbReference>
<dbReference type="RefSeq" id="WP_005080340.1">
    <property type="nucleotide sequence ID" value="NZ_MLCG01000001.1"/>
</dbReference>
<dbReference type="SMR" id="B1MHC6"/>
<dbReference type="GeneID" id="93380875"/>
<dbReference type="KEGG" id="mab:MAB_3933c"/>
<dbReference type="UniPathway" id="UPA00079"/>
<dbReference type="UniPathway" id="UPA01057">
    <property type="reaction ID" value="UER00164"/>
</dbReference>
<dbReference type="Proteomes" id="UP000007137">
    <property type="component" value="Chromosome"/>
</dbReference>
<dbReference type="GO" id="GO:0070204">
    <property type="term" value="F:2-succinyl-5-enolpyruvyl-6-hydroxy-3-cyclohexene-1-carboxylic-acid synthase activity"/>
    <property type="evidence" value="ECO:0007669"/>
    <property type="project" value="UniProtKB-UniRule"/>
</dbReference>
<dbReference type="GO" id="GO:0000287">
    <property type="term" value="F:magnesium ion binding"/>
    <property type="evidence" value="ECO:0007669"/>
    <property type="project" value="UniProtKB-UniRule"/>
</dbReference>
<dbReference type="GO" id="GO:0030145">
    <property type="term" value="F:manganese ion binding"/>
    <property type="evidence" value="ECO:0007669"/>
    <property type="project" value="UniProtKB-UniRule"/>
</dbReference>
<dbReference type="GO" id="GO:0030976">
    <property type="term" value="F:thiamine pyrophosphate binding"/>
    <property type="evidence" value="ECO:0007669"/>
    <property type="project" value="UniProtKB-UniRule"/>
</dbReference>
<dbReference type="GO" id="GO:0009234">
    <property type="term" value="P:menaquinone biosynthetic process"/>
    <property type="evidence" value="ECO:0007669"/>
    <property type="project" value="UniProtKB-UniRule"/>
</dbReference>
<dbReference type="CDD" id="cd07037">
    <property type="entry name" value="TPP_PYR_MenD"/>
    <property type="match status" value="1"/>
</dbReference>
<dbReference type="CDD" id="cd02009">
    <property type="entry name" value="TPP_SHCHC_synthase"/>
    <property type="match status" value="1"/>
</dbReference>
<dbReference type="Gene3D" id="3.40.50.970">
    <property type="match status" value="2"/>
</dbReference>
<dbReference type="Gene3D" id="3.40.50.1220">
    <property type="entry name" value="TPP-binding domain"/>
    <property type="match status" value="1"/>
</dbReference>
<dbReference type="HAMAP" id="MF_01659">
    <property type="entry name" value="MenD"/>
    <property type="match status" value="1"/>
</dbReference>
<dbReference type="InterPro" id="IPR004433">
    <property type="entry name" value="MenaQ_synth_MenD"/>
</dbReference>
<dbReference type="InterPro" id="IPR029061">
    <property type="entry name" value="THDP-binding"/>
</dbReference>
<dbReference type="InterPro" id="IPR012001">
    <property type="entry name" value="Thiamin_PyroP_enz_TPP-bd_dom"/>
</dbReference>
<dbReference type="InterPro" id="IPR011766">
    <property type="entry name" value="TPP_enzyme_TPP-bd"/>
</dbReference>
<dbReference type="NCBIfam" id="TIGR00173">
    <property type="entry name" value="menD"/>
    <property type="match status" value="1"/>
</dbReference>
<dbReference type="PANTHER" id="PTHR42916">
    <property type="entry name" value="2-SUCCINYL-5-ENOLPYRUVYL-6-HYDROXY-3-CYCLOHEXENE-1-CARBOXYLATE SYNTHASE"/>
    <property type="match status" value="1"/>
</dbReference>
<dbReference type="PANTHER" id="PTHR42916:SF1">
    <property type="entry name" value="PROTEIN PHYLLO, CHLOROPLASTIC"/>
    <property type="match status" value="1"/>
</dbReference>
<dbReference type="Pfam" id="PF02775">
    <property type="entry name" value="TPP_enzyme_C"/>
    <property type="match status" value="1"/>
</dbReference>
<dbReference type="Pfam" id="PF02776">
    <property type="entry name" value="TPP_enzyme_N"/>
    <property type="match status" value="1"/>
</dbReference>
<dbReference type="PIRSF" id="PIRSF004983">
    <property type="entry name" value="MenD"/>
    <property type="match status" value="1"/>
</dbReference>
<dbReference type="SUPFAM" id="SSF52518">
    <property type="entry name" value="Thiamin diphosphate-binding fold (THDP-binding)"/>
    <property type="match status" value="2"/>
</dbReference>
<feature type="chain" id="PRO_1000187080" description="2-succinyl-5-enolpyruvyl-6-hydroxy-3-cyclohexene-1-carboxylate synthase">
    <location>
        <begin position="1"/>
        <end position="540"/>
    </location>
</feature>
<proteinExistence type="inferred from homology"/>
<sequence>MNPSTAQAHAVVDELIRGGVRDVVLCPGSRNAPLAFALHDADKAGRLRLHVRIDERTAGFLAVGLAAASGSPVPVAMTSGTAVANLGPAVVEANYARVPLIVLSANRPYELLGTGANQTMEQLGYFGTQVRAAISIGLAEEGSEKIEAQNPHWRSATCRVLAAAKGSRTANAGPVQFDIPLREPLVPDRDGGPIPAGRPGGAPWTYTPDVTFDEPVEIDLTADTVVIAGHGAATHPNLSMLPTVAEPTAPQPDNPVHPLALTLLHPQQVIMLGRPTLHRQVSSLLADSRIPVYALTTGPRWPDVSGNSQATGTRAVTSGSPDPAWLQRCAHAHHKALDAVRGQLSTHPLTTGLHVAAHVCGSLRDGDQLVLGASNPVRDAALVPWGAKDVRVRSNRGVAGIDGTVSTAIGAALAHRGGRTVALIGDLTFVHDSSGLLIGPTEPRPENLTIVVSNDNGGGIFELLEQGDPRFHDVSSRIFGTPHDVDIAALCRAYHVDSQSISVEELGPALDEPARGIRVLEVKADRSTLRELHAAIRAAL</sequence>
<keyword id="KW-0460">Magnesium</keyword>
<keyword id="KW-0464">Manganese</keyword>
<keyword id="KW-0474">Menaquinone biosynthesis</keyword>
<keyword id="KW-0479">Metal-binding</keyword>
<keyword id="KW-1185">Reference proteome</keyword>
<keyword id="KW-0786">Thiamine pyrophosphate</keyword>
<keyword id="KW-0808">Transferase</keyword>
<accession>B1MHC6</accession>
<name>MEND_MYCA9</name>
<organism>
    <name type="scientific">Mycobacteroides abscessus (strain ATCC 19977 / DSM 44196 / CCUG 20993 / CIP 104536 / JCM 13569 / NCTC 13031 / TMC 1543 / L948)</name>
    <name type="common">Mycobacterium abscessus</name>
    <dbReference type="NCBI Taxonomy" id="561007"/>
    <lineage>
        <taxon>Bacteria</taxon>
        <taxon>Bacillati</taxon>
        <taxon>Actinomycetota</taxon>
        <taxon>Actinomycetes</taxon>
        <taxon>Mycobacteriales</taxon>
        <taxon>Mycobacteriaceae</taxon>
        <taxon>Mycobacteroides</taxon>
        <taxon>Mycobacteroides abscessus</taxon>
    </lineage>
</organism>
<reference key="1">
    <citation type="journal article" date="2009" name="PLoS ONE">
        <title>Non mycobacterial virulence genes in the genome of the emerging pathogen Mycobacterium abscessus.</title>
        <authorList>
            <person name="Ripoll F."/>
            <person name="Pasek S."/>
            <person name="Schenowitz C."/>
            <person name="Dossat C."/>
            <person name="Barbe V."/>
            <person name="Rottman M."/>
            <person name="Macheras E."/>
            <person name="Heym B."/>
            <person name="Herrmann J.L."/>
            <person name="Daffe M."/>
            <person name="Brosch R."/>
            <person name="Risler J.L."/>
            <person name="Gaillard J.L."/>
        </authorList>
    </citation>
    <scope>NUCLEOTIDE SEQUENCE [LARGE SCALE GENOMIC DNA]</scope>
    <source>
        <strain>ATCC 19977 / DSM 44196 / CCUG 20993 / CIP 104536 / JCM 13569 / NCTC 13031 / TMC 1543 / L948</strain>
    </source>
</reference>
<gene>
    <name evidence="1" type="primary">menD</name>
    <name type="ordered locus">MAB_3933c</name>
</gene>
<protein>
    <recommendedName>
        <fullName evidence="1">2-succinyl-5-enolpyruvyl-6-hydroxy-3-cyclohexene-1-carboxylate synthase</fullName>
        <shortName evidence="1">SEPHCHC synthase</shortName>
        <ecNumber evidence="1">2.2.1.9</ecNumber>
    </recommendedName>
    <alternativeName>
        <fullName evidence="1">Menaquinone biosynthesis protein MenD</fullName>
    </alternativeName>
</protein>
<evidence type="ECO:0000255" key="1">
    <source>
        <dbReference type="HAMAP-Rule" id="MF_01659"/>
    </source>
</evidence>
<comment type="function">
    <text evidence="1">Catalyzes the thiamine diphosphate-dependent decarboxylation of 2-oxoglutarate and the subsequent addition of the resulting succinic semialdehyde-thiamine pyrophosphate anion to isochorismate to yield 2-succinyl-5-enolpyruvyl-6-hydroxy-3-cyclohexene-1-carboxylate (SEPHCHC).</text>
</comment>
<comment type="catalytic activity">
    <reaction evidence="1">
        <text>isochorismate + 2-oxoglutarate + H(+) = 5-enolpyruvoyl-6-hydroxy-2-succinyl-cyclohex-3-ene-1-carboxylate + CO2</text>
        <dbReference type="Rhea" id="RHEA:25593"/>
        <dbReference type="ChEBI" id="CHEBI:15378"/>
        <dbReference type="ChEBI" id="CHEBI:16526"/>
        <dbReference type="ChEBI" id="CHEBI:16810"/>
        <dbReference type="ChEBI" id="CHEBI:29780"/>
        <dbReference type="ChEBI" id="CHEBI:58818"/>
        <dbReference type="EC" id="2.2.1.9"/>
    </reaction>
</comment>
<comment type="cofactor">
    <cofactor evidence="1">
        <name>Mg(2+)</name>
        <dbReference type="ChEBI" id="CHEBI:18420"/>
    </cofactor>
    <cofactor evidence="1">
        <name>Mn(2+)</name>
        <dbReference type="ChEBI" id="CHEBI:29035"/>
    </cofactor>
</comment>
<comment type="cofactor">
    <cofactor evidence="1">
        <name>thiamine diphosphate</name>
        <dbReference type="ChEBI" id="CHEBI:58937"/>
    </cofactor>
    <text evidence="1">Binds 1 thiamine pyrophosphate per subunit.</text>
</comment>
<comment type="pathway">
    <text evidence="1">Quinol/quinone metabolism; 1,4-dihydroxy-2-naphthoate biosynthesis; 1,4-dihydroxy-2-naphthoate from chorismate: step 2/7.</text>
</comment>
<comment type="pathway">
    <text evidence="1">Quinol/quinone metabolism; menaquinone biosynthesis.</text>
</comment>
<comment type="subunit">
    <text evidence="1">Homodimer.</text>
</comment>
<comment type="similarity">
    <text evidence="1">Belongs to the TPP enzyme family. MenD subfamily.</text>
</comment>